<name>NDRG1_MOUSE</name>
<feature type="initiator methionine" description="Removed" evidence="3">
    <location>
        <position position="1"/>
    </location>
</feature>
<feature type="chain" id="PRO_0000159574" description="Protein NDRG1">
    <location>
        <begin position="2"/>
        <end position="394"/>
    </location>
</feature>
<feature type="repeat" description="1">
    <location>
        <begin position="339"/>
        <end position="348"/>
    </location>
</feature>
<feature type="repeat" description="2">
    <location>
        <begin position="349"/>
        <end position="358"/>
    </location>
</feature>
<feature type="repeat" description="3">
    <location>
        <begin position="359"/>
        <end position="368"/>
    </location>
</feature>
<feature type="region of interest" description="Disordered" evidence="4">
    <location>
        <begin position="325"/>
        <end position="394"/>
    </location>
</feature>
<feature type="region of interest" description="3 X 10 AA tandem repeats of G-[PST]-R-S-R-S-H-T-S-E">
    <location>
        <begin position="339"/>
        <end position="368"/>
    </location>
</feature>
<feature type="compositionally biased region" description="Polar residues" evidence="4">
    <location>
        <begin position="327"/>
        <end position="339"/>
    </location>
</feature>
<feature type="compositionally biased region" description="Basic and acidic residues" evidence="4">
    <location>
        <begin position="345"/>
        <end position="371"/>
    </location>
</feature>
<feature type="compositionally biased region" description="Polar residues" evidence="4">
    <location>
        <begin position="374"/>
        <end position="386"/>
    </location>
</feature>
<feature type="modified residue" description="N-acetylserine" evidence="3">
    <location>
        <position position="2"/>
    </location>
</feature>
<feature type="modified residue" description="Phosphoserine" evidence="3">
    <location>
        <position position="2"/>
    </location>
</feature>
<feature type="modified residue" description="Phosphoserine" evidence="13">
    <location>
        <position position="319"/>
    </location>
</feature>
<feature type="modified residue" description="Phosphoserine" evidence="13">
    <location>
        <position position="326"/>
    </location>
</feature>
<feature type="modified residue" description="Phosphothreonine" evidence="13">
    <location>
        <position position="328"/>
    </location>
</feature>
<feature type="modified residue" description="Phosphoserine; by SGK1" evidence="12 13">
    <location>
        <position position="330"/>
    </location>
</feature>
<feature type="modified residue" description="Phosphoserine" evidence="13">
    <location>
        <position position="332"/>
    </location>
</feature>
<feature type="modified residue" description="Phosphoserine" evidence="13">
    <location>
        <position position="333"/>
    </location>
</feature>
<feature type="modified residue" description="Phosphothreonine" evidence="13">
    <location>
        <position position="335"/>
    </location>
</feature>
<feature type="modified residue" description="Phosphoserine" evidence="12 13">
    <location>
        <position position="336"/>
    </location>
</feature>
<feature type="modified residue" description="Phosphothreonine" evidence="13">
    <location>
        <position position="340"/>
    </location>
</feature>
<feature type="modified residue" description="Phosphoserine" evidence="13">
    <location>
        <position position="342"/>
    </location>
</feature>
<feature type="modified residue" description="Phosphothreonine; by SGK1" evidence="7">
    <location>
        <position position="346"/>
    </location>
</feature>
<feature type="modified residue" description="Phosphoserine" evidence="2">
    <location>
        <position position="352"/>
    </location>
</feature>
<feature type="modified residue" description="Phosphothreonine; by SGK1" evidence="3">
    <location>
        <position position="356"/>
    </location>
</feature>
<feature type="modified residue" description="Phosphoserine" evidence="2">
    <location>
        <position position="362"/>
    </location>
</feature>
<feature type="modified residue" description="Phosphoserine" evidence="3">
    <location>
        <position position="364"/>
    </location>
</feature>
<feature type="modified residue" description="Phosphothreonine; by SGK1" evidence="3">
    <location>
        <position position="366"/>
    </location>
</feature>
<feature type="modified residue" description="Phosphothreonine" evidence="3">
    <location>
        <position position="375"/>
    </location>
</feature>
<feature type="sequence conflict" description="In Ref. 2; AAB58249." evidence="11" ref="2">
    <original>QEQ</original>
    <variation>LEE</variation>
    <location>
        <begin position="33"/>
        <end position="35"/>
    </location>
</feature>
<feature type="sequence conflict" description="In Ref. 2; AAB58249." evidence="11" ref="2">
    <original>F</original>
    <variation>P</variation>
    <location>
        <position position="89"/>
    </location>
</feature>
<feature type="sequence conflict" description="In Ref. 2; AAB58249." evidence="11" ref="2">
    <original>APSFPVG</original>
    <variation>PLPSQW</variation>
    <location>
        <begin position="103"/>
        <end position="109"/>
    </location>
</feature>
<feature type="sequence conflict" description="In Ref. 2; AAB58249." evidence="11" ref="2">
    <original>AGAYILTR</original>
    <variation>PWXLHPDP</variation>
    <location>
        <begin position="141"/>
        <end position="148"/>
    </location>
</feature>
<feature type="sequence conflict" description="In Ref. 2; AAB58249." evidence="11" ref="2">
    <original>VVSHLFGKEEIHNNVEVV</original>
    <variation>CVPPLRXGGDTQQRGGM</variation>
    <location>
        <begin position="191"/>
        <end position="208"/>
    </location>
</feature>
<feature type="sequence conflict" description="In Ref. 2; AAB58249." evidence="11" ref="2">
    <original>R</original>
    <variation>A</variation>
    <location>
        <position position="241"/>
    </location>
</feature>
<feature type="sequence conflict" description="In Ref. 2; AAB58249." evidence="11" ref="2">
    <original>PAKLAEAFKYFVQGMGYMPSASMTRLMRSRTASGSSVTSLEGTRSRSHTSEGP</original>
    <variation>RPSLLRPSSTLCRHGIHAFCQHDSPDRVPHPVWLQCHILEGT</variation>
    <location>
        <begin position="298"/>
        <end position="350"/>
    </location>
</feature>
<accession>Q62433</accession>
<accession>P97862</accession>
<dbReference type="EMBL" id="U60593">
    <property type="protein sequence ID" value="AAB03484.1"/>
    <property type="molecule type" value="mRNA"/>
</dbReference>
<dbReference type="EMBL" id="U52073">
    <property type="protein sequence ID" value="AAB58249.1"/>
    <property type="molecule type" value="mRNA"/>
</dbReference>
<dbReference type="EMBL" id="BC015282">
    <property type="protein sequence ID" value="AAH15282.1"/>
    <property type="molecule type" value="mRNA"/>
</dbReference>
<dbReference type="EMBL" id="BC071235">
    <property type="protein sequence ID" value="AAH71235.1"/>
    <property type="molecule type" value="mRNA"/>
</dbReference>
<dbReference type="CCDS" id="CCDS37092.1"/>
<dbReference type="RefSeq" id="NP_032707.2">
    <property type="nucleotide sequence ID" value="NM_008681.2"/>
</dbReference>
<dbReference type="SMR" id="Q62433"/>
<dbReference type="BioGRID" id="201714">
    <property type="interactions" value="23"/>
</dbReference>
<dbReference type="FunCoup" id="Q62433">
    <property type="interactions" value="1599"/>
</dbReference>
<dbReference type="IntAct" id="Q62433">
    <property type="interactions" value="1"/>
</dbReference>
<dbReference type="STRING" id="10090.ENSMUSP00000005256"/>
<dbReference type="ESTHER" id="mouse-ndr1">
    <property type="family name" value="Ndr_family"/>
</dbReference>
<dbReference type="MEROPS" id="S33.988"/>
<dbReference type="GlyGen" id="Q62433">
    <property type="glycosylation" value="1 site, 1 O-linked glycan (1 site)"/>
</dbReference>
<dbReference type="iPTMnet" id="Q62433"/>
<dbReference type="PhosphoSitePlus" id="Q62433"/>
<dbReference type="SwissPalm" id="Q62433"/>
<dbReference type="jPOST" id="Q62433"/>
<dbReference type="PaxDb" id="10090-ENSMUSP00000005256"/>
<dbReference type="ProteomicsDB" id="286160"/>
<dbReference type="Pumba" id="Q62433"/>
<dbReference type="Antibodypedia" id="1521">
    <property type="antibodies" value="640 antibodies from 42 providers"/>
</dbReference>
<dbReference type="DNASU" id="17988"/>
<dbReference type="Ensembl" id="ENSMUST00000005256.14">
    <property type="protein sequence ID" value="ENSMUSP00000005256.7"/>
    <property type="gene ID" value="ENSMUSG00000005125.14"/>
</dbReference>
<dbReference type="GeneID" id="17988"/>
<dbReference type="KEGG" id="mmu:17988"/>
<dbReference type="UCSC" id="uc007wax.1">
    <property type="organism name" value="mouse"/>
</dbReference>
<dbReference type="AGR" id="MGI:1341799"/>
<dbReference type="CTD" id="10397"/>
<dbReference type="MGI" id="MGI:1341799">
    <property type="gene designation" value="Ndrg1"/>
</dbReference>
<dbReference type="VEuPathDB" id="HostDB:ENSMUSG00000005125"/>
<dbReference type="eggNOG" id="KOG2931">
    <property type="taxonomic scope" value="Eukaryota"/>
</dbReference>
<dbReference type="GeneTree" id="ENSGT00950000182872"/>
<dbReference type="HOGENOM" id="CLU_035361_1_0_1"/>
<dbReference type="InParanoid" id="Q62433"/>
<dbReference type="OMA" id="LVEKGEX"/>
<dbReference type="OrthoDB" id="741027at2759"/>
<dbReference type="PhylomeDB" id="Q62433"/>
<dbReference type="TreeFam" id="TF313168"/>
<dbReference type="BioGRID-ORCS" id="17988">
    <property type="hits" value="2 hits in 78 CRISPR screens"/>
</dbReference>
<dbReference type="ChiTaRS" id="Ndrg1">
    <property type="organism name" value="mouse"/>
</dbReference>
<dbReference type="PRO" id="PR:Q62433"/>
<dbReference type="Proteomes" id="UP000000589">
    <property type="component" value="Chromosome 15"/>
</dbReference>
<dbReference type="RNAct" id="Q62433">
    <property type="molecule type" value="protein"/>
</dbReference>
<dbReference type="Bgee" id="ENSMUSG00000005125">
    <property type="expression patterns" value="Expressed in sciatic nerve and 293 other cell types or tissues"/>
</dbReference>
<dbReference type="ExpressionAtlas" id="Q62433">
    <property type="expression patterns" value="baseline and differential"/>
</dbReference>
<dbReference type="GO" id="GO:0005912">
    <property type="term" value="C:adherens junction"/>
    <property type="evidence" value="ECO:0007669"/>
    <property type="project" value="Ensembl"/>
</dbReference>
<dbReference type="GO" id="GO:0005813">
    <property type="term" value="C:centrosome"/>
    <property type="evidence" value="ECO:0007669"/>
    <property type="project" value="UniProtKB-SubCell"/>
</dbReference>
<dbReference type="GO" id="GO:0005737">
    <property type="term" value="C:cytoplasm"/>
    <property type="evidence" value="ECO:0000314"/>
    <property type="project" value="UniProtKB"/>
</dbReference>
<dbReference type="GO" id="GO:0005829">
    <property type="term" value="C:cytosol"/>
    <property type="evidence" value="ECO:0007669"/>
    <property type="project" value="UniProtKB-SubCell"/>
</dbReference>
<dbReference type="GO" id="GO:0005874">
    <property type="term" value="C:microtubule"/>
    <property type="evidence" value="ECO:0007669"/>
    <property type="project" value="UniProtKB-KW"/>
</dbReference>
<dbReference type="GO" id="GO:0043209">
    <property type="term" value="C:myelin sheath"/>
    <property type="evidence" value="ECO:0007005"/>
    <property type="project" value="UniProtKB"/>
</dbReference>
<dbReference type="GO" id="GO:0005634">
    <property type="term" value="C:nucleus"/>
    <property type="evidence" value="ECO:0007669"/>
    <property type="project" value="UniProtKB-SubCell"/>
</dbReference>
<dbReference type="GO" id="GO:0048471">
    <property type="term" value="C:perinuclear region of cytoplasm"/>
    <property type="evidence" value="ECO:0007669"/>
    <property type="project" value="Ensembl"/>
</dbReference>
<dbReference type="GO" id="GO:0005886">
    <property type="term" value="C:plasma membrane"/>
    <property type="evidence" value="ECO:0007669"/>
    <property type="project" value="UniProtKB-SubCell"/>
</dbReference>
<dbReference type="GO" id="GO:0055038">
    <property type="term" value="C:recycling endosome membrane"/>
    <property type="evidence" value="ECO:0007669"/>
    <property type="project" value="Ensembl"/>
</dbReference>
<dbReference type="GO" id="GO:0045296">
    <property type="term" value="F:cadherin binding"/>
    <property type="evidence" value="ECO:0007669"/>
    <property type="project" value="Ensembl"/>
</dbReference>
<dbReference type="GO" id="GO:0043015">
    <property type="term" value="F:gamma-tubulin binding"/>
    <property type="evidence" value="ECO:0007669"/>
    <property type="project" value="Ensembl"/>
</dbReference>
<dbReference type="GO" id="GO:0008017">
    <property type="term" value="F:microtubule binding"/>
    <property type="evidence" value="ECO:0007669"/>
    <property type="project" value="Ensembl"/>
</dbReference>
<dbReference type="GO" id="GO:0016151">
    <property type="term" value="F:nickel cation binding"/>
    <property type="evidence" value="ECO:0007669"/>
    <property type="project" value="Ensembl"/>
</dbReference>
<dbReference type="GO" id="GO:0031267">
    <property type="term" value="F:small GTPase binding"/>
    <property type="evidence" value="ECO:0007669"/>
    <property type="project" value="Ensembl"/>
</dbReference>
<dbReference type="GO" id="GO:0071456">
    <property type="term" value="P:cellular response to hypoxia"/>
    <property type="evidence" value="ECO:0007669"/>
    <property type="project" value="Ensembl"/>
</dbReference>
<dbReference type="GO" id="GO:0030330">
    <property type="term" value="P:DNA damage response, signal transduction by p53 class mediator"/>
    <property type="evidence" value="ECO:0007669"/>
    <property type="project" value="Ensembl"/>
</dbReference>
<dbReference type="GO" id="GO:0045576">
    <property type="term" value="P:mast cell activation"/>
    <property type="evidence" value="ECO:0000314"/>
    <property type="project" value="MGI"/>
</dbReference>
<dbReference type="GO" id="GO:0008285">
    <property type="term" value="P:negative regulation of cell population proliferation"/>
    <property type="evidence" value="ECO:0000315"/>
    <property type="project" value="CACAO"/>
</dbReference>
<dbReference type="GO" id="GO:0032287">
    <property type="term" value="P:peripheral nervous system myelin maintenance"/>
    <property type="evidence" value="ECO:0000315"/>
    <property type="project" value="UniProtKB"/>
</dbReference>
<dbReference type="FunFam" id="3.40.50.1820:FF:000006">
    <property type="entry name" value="NDRG family member 3"/>
    <property type="match status" value="1"/>
</dbReference>
<dbReference type="Gene3D" id="3.40.50.1820">
    <property type="entry name" value="alpha/beta hydrolase"/>
    <property type="match status" value="1"/>
</dbReference>
<dbReference type="InterPro" id="IPR029058">
    <property type="entry name" value="AB_hydrolase_fold"/>
</dbReference>
<dbReference type="InterPro" id="IPR004142">
    <property type="entry name" value="NDRG"/>
</dbReference>
<dbReference type="PANTHER" id="PTHR11034">
    <property type="entry name" value="N-MYC DOWNSTREAM REGULATED"/>
    <property type="match status" value="1"/>
</dbReference>
<dbReference type="Pfam" id="PF03096">
    <property type="entry name" value="Ndr"/>
    <property type="match status" value="1"/>
</dbReference>
<dbReference type="SUPFAM" id="SSF53474">
    <property type="entry name" value="alpha/beta-Hydrolases"/>
    <property type="match status" value="1"/>
</dbReference>
<keyword id="KW-0007">Acetylation</keyword>
<keyword id="KW-1003">Cell membrane</keyword>
<keyword id="KW-0963">Cytoplasm</keyword>
<keyword id="KW-0206">Cytoskeleton</keyword>
<keyword id="KW-0472">Membrane</keyword>
<keyword id="KW-0493">Microtubule</keyword>
<keyword id="KW-0539">Nucleus</keyword>
<keyword id="KW-0597">Phosphoprotein</keyword>
<keyword id="KW-1185">Reference proteome</keyword>
<keyword id="KW-0677">Repeat</keyword>
<gene>
    <name type="primary">Ndrg1</name>
    <name type="synonym">Ndr1</name>
    <name type="synonym">Ndrl</name>
    <name type="synonym">Tdd5</name>
</gene>
<organism>
    <name type="scientific">Mus musculus</name>
    <name type="common">Mouse</name>
    <dbReference type="NCBI Taxonomy" id="10090"/>
    <lineage>
        <taxon>Eukaryota</taxon>
        <taxon>Metazoa</taxon>
        <taxon>Chordata</taxon>
        <taxon>Craniata</taxon>
        <taxon>Vertebrata</taxon>
        <taxon>Euteleostomi</taxon>
        <taxon>Mammalia</taxon>
        <taxon>Eutheria</taxon>
        <taxon>Euarchontoglires</taxon>
        <taxon>Glires</taxon>
        <taxon>Rodentia</taxon>
        <taxon>Myomorpha</taxon>
        <taxon>Muroidea</taxon>
        <taxon>Muridae</taxon>
        <taxon>Murinae</taxon>
        <taxon>Mus</taxon>
        <taxon>Mus</taxon>
    </lineage>
</organism>
<protein>
    <recommendedName>
        <fullName>Protein NDRG1</fullName>
    </recommendedName>
    <alternativeName>
        <fullName>N-myc downstream-regulated gene 1 protein</fullName>
        <shortName>Protein Ndr1</shortName>
    </alternativeName>
</protein>
<proteinExistence type="evidence at protein level"/>
<comment type="function">
    <text evidence="1 6 8">Stress-responsive protein involved in hormone responses, cell growth, and differentiation. Acts as a tumor suppressor in many cell types. Necessary but not sufficient for p53/TP53-mediated caspase activation and apoptosis. Required for vesicular recycling of CDH1 and TF. May also function in lipid trafficking. Protects cells from spindle disruption damage. Functions in p53/TP53-dependent mitotic spindle checkpoint. Regulates microtubule dynamics and maintains euploidy (By similarity). Has a role in cell trafficking notably of the Schwann cell and is necessary for the maintenance and development of the peripheral nerve myelin sheath.</text>
</comment>
<comment type="subunit">
    <text evidence="1">Interacts with RAB4A (membrane-bound form); the interaction involves NDRG1 in vesicular recycling of CDH1. Interacts with APOA1, APOA2, PRA1 and RTN1 (By similarity).</text>
</comment>
<comment type="subcellular location">
    <subcellularLocation>
        <location>Cytoplasm</location>
        <location>Cytosol</location>
    </subcellularLocation>
    <subcellularLocation>
        <location>Cytoplasm</location>
        <location>Cytoskeleton</location>
        <location>Microtubule organizing center</location>
        <location>Centrosome</location>
    </subcellularLocation>
    <subcellularLocation>
        <location>Nucleus</location>
    </subcellularLocation>
    <subcellularLocation>
        <location evidence="1">Cell membrane</location>
    </subcellularLocation>
    <text evidence="1">Mainly cytoplasmic but differentially localized to other regions. Associates with the plasma membrane in intestinal epithelia and lactating mammary gland. Translocated to the nucleus in a p53/TP53-dependent manner. In prostate epithelium and placental chorion, located in both the cytoplasm and in the nucleus. No nuclear localization in colon epithelium cells. In intestinal mucosa, prostate and renal cortex, located predominantly adjacent to adherens junctions. Cytoplasmic with granular staining in proximal tubular cells of the kidney and salivary gland ducts. Recruits to the membrane of recycling/sorting and late endosomes via binding to phosphatidylinositol 4-phosphate. Associates with microtubules. Colocalizes with TUBG1 in the centrosome. Cytoplasmic location increased with hypoxia. Phosphorylated form found associated with centromeres during S-phase of mitosis and with the plasma membrane (By similarity).</text>
</comment>
<comment type="tissue specificity">
    <text evidence="6 7 9 10">Widely expressed, with highest levels in kidney followed by brain, pancreas, small intestine, colon and spleen (at protein level). Also detected in heart and preputial gland, and in much smaller quantities in other tissues. Not detected in duodenum and prostate. Highly expressed in Schwann cells.</text>
</comment>
<comment type="developmental stage">
    <text evidence="5">In early stages of embryo development, expression low when MYCN expression is high. Later, when MYCN levels diminish, levels increase.</text>
</comment>
<comment type="induction">
    <text evidence="5 10">Repressed by testosterone and also to a lesser extent by dihydrotestosterone. Down-regulated by MYCN.</text>
</comment>
<comment type="PTM">
    <text evidence="1">Under stress conditions, phosphorylated in the C-terminal on many serine and threonine residues. Phosphorylated in vitro by PKA. Phosphorylation enhanced by increased intracellular cAMP levels. Homocysteine induces dephosphorylation. Phosphorylation by SGK1 is cell cycle dependent (By similarity).</text>
</comment>
<comment type="disruption phenotype">
    <text evidence="6 8">Mutant mice exhibit defects in peripheral nerve development. Initial hind limb weakness developed around age 12 weeks, and significant functional impairment (dragging of hind legs) and muscle atrophy became apparent at age 1 year. After about 5 weeks extensive demyelination of nerve fibers is observed. In later life, large inclusions were seen in the adaxonal Schwann cell cytoplasm. There is no evidence of apoptotic response.</text>
</comment>
<comment type="similarity">
    <text evidence="11">Belongs to the NDRG family.</text>
</comment>
<evidence type="ECO:0000250" key="1"/>
<evidence type="ECO:0000250" key="2">
    <source>
        <dbReference type="UniProtKB" id="Q6JE36"/>
    </source>
</evidence>
<evidence type="ECO:0000250" key="3">
    <source>
        <dbReference type="UniProtKB" id="Q92597"/>
    </source>
</evidence>
<evidence type="ECO:0000256" key="4">
    <source>
        <dbReference type="SAM" id="MobiDB-lite"/>
    </source>
</evidence>
<evidence type="ECO:0000269" key="5">
    <source>
    </source>
</evidence>
<evidence type="ECO:0000269" key="6">
    <source>
    </source>
</evidence>
<evidence type="ECO:0000269" key="7">
    <source>
    </source>
</evidence>
<evidence type="ECO:0000269" key="8">
    <source>
    </source>
</evidence>
<evidence type="ECO:0000269" key="9">
    <source>
    </source>
</evidence>
<evidence type="ECO:0000269" key="10">
    <source>
    </source>
</evidence>
<evidence type="ECO:0000305" key="11"/>
<evidence type="ECO:0007744" key="12">
    <source>
    </source>
</evidence>
<evidence type="ECO:0007744" key="13">
    <source>
    </source>
</evidence>
<sequence length="394" mass="43009">MSRELHDVDLAEVKPLVEKGESITGLLQEFDVQEQDIETLHGSLHVTLCGTPKGNRPVILTYHDIGMNHKTCYNPLFNSEDMQEITQHFAVCHVDAPGQQDGAPSFPVGYMYPSMDQLAEMLPGVLHQFGLKSVIGMGTGAGAYILTRFALNNPEMVEGLVLMNVNPCAEGWMDWAASKISGWTQALPDMVVSHLFGKEEIHNNVEVVHTYRQHILNDMNPSNLHLFISAYNSRRDLEIERPMPGTHTVTLQCPALLVVGDNSPAVDAVVECNSKLDPTKTTLLKMADCGGLPQISQPAKLAEAFKYFVQGMGYMPSASMTRLMRSRTASGSSVTSLEGTRSRSHTSEGPRSRSHTSEGSRSRSHTSEDARLNITPNSGATGNNAGPKSMEVSC</sequence>
<reference key="1">
    <citation type="journal article" date="1999" name="Mech. Dev.">
        <title>N-myc-dependent repression of ndr1, a gene identified by direct subtraction of whole mouse embryo cDNAs between wild type and N-myc mutant.</title>
        <authorList>
            <person name="Shimono A."/>
            <person name="Okuda T."/>
            <person name="Kondoh H."/>
        </authorList>
    </citation>
    <scope>NUCLEOTIDE SEQUENCE [MRNA]</scope>
    <scope>SUBCELLULAR LOCATION</scope>
    <scope>DEVELOPMENTAL STAGE</scope>
    <scope>INDUCTION</scope>
    <source>
        <tissue>Embryo</tissue>
    </source>
</reference>
<reference key="2">
    <citation type="journal article" date="1997" name="Proc. Natl. Acad. Sci. U.S.A.">
        <title>Cloning and characterization of TDD5, an androgen target gene that is differentially repressed by testosterone and dihydrotestosterone.</title>
        <authorList>
            <person name="Lin T.-M."/>
            <person name="Chang C."/>
        </authorList>
    </citation>
    <scope>NUCLEOTIDE SEQUENCE [MRNA]</scope>
    <scope>TISSUE SPECIFICITY</scope>
    <scope>INDUCTION</scope>
    <source>
        <tissue>Hybridoma</tissue>
    </source>
</reference>
<reference key="3">
    <citation type="journal article" date="2004" name="Genome Res.">
        <title>The status, quality, and expansion of the NIH full-length cDNA project: the Mammalian Gene Collection (MGC).</title>
        <authorList>
            <consortium name="The MGC Project Team"/>
        </authorList>
    </citation>
    <scope>NUCLEOTIDE SEQUENCE [LARGE SCALE MRNA]</scope>
    <source>
        <strain>FVB/N</strain>
        <tissue>Kidney</tissue>
    </source>
</reference>
<reference key="4">
    <citation type="journal article" date="2004" name="Biochem. J.">
        <title>Exploitation of KESTREL to identify NDRG family members as physiological substrates for SGK1 and GSK3.</title>
        <authorList>
            <person name="Murray J.T."/>
            <person name="Campbell D.G."/>
            <person name="Morrice N."/>
            <person name="Auld G.C."/>
            <person name="Shpiro N."/>
            <person name="Marquez R."/>
            <person name="Peggie M."/>
            <person name="Bain J."/>
            <person name="Bloomberg G.B."/>
            <person name="Grahammer F."/>
            <person name="Lang F."/>
            <person name="Wulff P."/>
            <person name="Kuhl D."/>
            <person name="Cohen P."/>
        </authorList>
    </citation>
    <scope>PHOSPHORYLATION AT THR-346; THR-356 AND THR-366</scope>
    <scope>SUBCELLULAR LOCATION</scope>
    <scope>TISSUE SPECIFICITY</scope>
    <scope>IDENTIFICATION BY MASS SPECTROMETRY</scope>
</reference>
<reference key="5">
    <citation type="journal article" date="2004" name="Mol. Cell. Biol.">
        <title>Ndrg1-deficient mice exhibit a progressive demyelinating disorder of peripheral nerves.</title>
        <authorList>
            <person name="Okuda T."/>
            <person name="Higashi Y."/>
            <person name="Kokame K."/>
            <person name="Tanaka C."/>
            <person name="Kondoh H."/>
            <person name="Miyata T."/>
        </authorList>
    </citation>
    <scope>DISRUPTION PHENOTYPE</scope>
    <scope>SUBCELLULAR LOCATION</scope>
    <scope>TISSUE SPECIFICITY</scope>
    <scope>FUNCTION</scope>
</reference>
<reference key="6">
    <citation type="journal article" date="2007" name="Proc. Natl. Acad. Sci. U.S.A.">
        <title>Large-scale phosphorylation analysis of mouse liver.</title>
        <authorList>
            <person name="Villen J."/>
            <person name="Beausoleil S.A."/>
            <person name="Gerber S.A."/>
            <person name="Gygi S.P."/>
        </authorList>
    </citation>
    <scope>PHOSPHORYLATION [LARGE SCALE ANALYSIS] AT SER-330 AND SER-336</scope>
    <scope>IDENTIFICATION BY MASS SPECTROMETRY [LARGE SCALE ANALYSIS]</scope>
    <source>
        <tissue>Liver</tissue>
    </source>
</reference>
<reference key="7">
    <citation type="journal article" date="2009" name="Immunity">
        <title>The phagosomal proteome in interferon-gamma-activated macrophages.</title>
        <authorList>
            <person name="Trost M."/>
            <person name="English L."/>
            <person name="Lemieux S."/>
            <person name="Courcelles M."/>
            <person name="Desjardins M."/>
            <person name="Thibault P."/>
        </authorList>
    </citation>
    <scope>IDENTIFICATION BY MASS SPECTROMETRY [LARGE SCALE ANALYSIS]</scope>
</reference>
<reference key="8">
    <citation type="journal article" date="2010" name="Cell">
        <title>A tissue-specific atlas of mouse protein phosphorylation and expression.</title>
        <authorList>
            <person name="Huttlin E.L."/>
            <person name="Jedrychowski M.P."/>
            <person name="Elias J.E."/>
            <person name="Goswami T."/>
            <person name="Rad R."/>
            <person name="Beausoleil S.A."/>
            <person name="Villen J."/>
            <person name="Haas W."/>
            <person name="Sowa M.E."/>
            <person name="Gygi S.P."/>
        </authorList>
    </citation>
    <scope>PHOSPHORYLATION [LARGE SCALE ANALYSIS] AT SER-319; SER-326; THR-328; SER-330; SER-332; SER-333; THR-335; SER-336; THR-340 AND SER-342</scope>
    <scope>IDENTIFICATION BY MASS SPECTROMETRY [LARGE SCALE ANALYSIS]</scope>
    <source>
        <tissue>Brain</tissue>
        <tissue>Brown adipose tissue</tissue>
        <tissue>Heart</tissue>
        <tissue>Kidney</tissue>
        <tissue>Liver</tissue>
        <tissue>Lung</tissue>
        <tissue>Pancreas</tissue>
        <tissue>Spleen</tissue>
        <tissue>Testis</tissue>
    </source>
</reference>
<reference key="9">
    <citation type="journal article" date="2011" name="J. Biol. Chem.">
        <title>NDRG4 protein-deficient mice exhibit spatial learning deficits and vulnerabilities to cerebral ischemia.</title>
        <authorList>
            <person name="Yamamoto H."/>
            <person name="Kokame K."/>
            <person name="Okuda T."/>
            <person name="Nakajo Y."/>
            <person name="Yanamoto H."/>
            <person name="Miyata T."/>
        </authorList>
    </citation>
    <scope>TISSUE SPECIFICITY</scope>
</reference>
<reference key="10">
    <citation type="journal article" date="2011" name="Neurobiol. Dis.">
        <title>Ndrg1 in development and maintenance of the myelin sheath.</title>
        <authorList>
            <person name="King R.H."/>
            <person name="Chandler D."/>
            <person name="Lopaticki S."/>
            <person name="Huang D."/>
            <person name="Blake J."/>
            <person name="Muddle J.R."/>
            <person name="Kilpatrick T."/>
            <person name="Nourallah M."/>
            <person name="Miyata T."/>
            <person name="Okuda T."/>
            <person name="Carter K.W."/>
            <person name="Hunter M."/>
            <person name="Angelicheva D."/>
            <person name="Morahan G."/>
            <person name="Kalaydjieva L."/>
        </authorList>
    </citation>
    <scope>DISRUPTION PHENOTYPE</scope>
    <scope>CHARACTERISTICS OF A MOUSE MODEL OF CMT4D</scope>
    <scope>FUNCTION</scope>
    <scope>SUBCELLULAR LOCATION</scope>
</reference>